<evidence type="ECO:0000255" key="1">
    <source>
        <dbReference type="HAMAP-Rule" id="MF_00125"/>
    </source>
</evidence>
<sequence length="395" mass="42919">MATVDRWLLPDGIEEVLPPEAARIEVVRRQMLDLFQRWGYAFVVTPHIEFLESLLTGAGQDLDLRTLKVTDPLSGRLIGFRADITPQVARIDAHTLRREGPCRLCYAGSVLHAKPRALSTSRSPIQLGAELYGDASPASDVEVISLMLEVLEQVAVPDVHMDLGHVGIYRGLARAAGLSGEVEQRLFDALQRKAVDEVEVLTAVLPTAQAAMLRALAELCGGREVLDLAQACLVDAPAEVHAALDELIAIADSLGVRYPELPLYFDLSELRGYNYHTGVVFAAFVPGVGQSIAQGGRYDDIGADFGRARPATGFSTDLKTLVTLGQVAPAEPVVGIWAPDSHDVYLWQMVQRLRRQGERVVQALPGQRIDAARAGGCDRQLLLSDGQWQVVPLAL</sequence>
<dbReference type="EMBL" id="CP001157">
    <property type="protein sequence ID" value="ACO77005.1"/>
    <property type="molecule type" value="Genomic_DNA"/>
</dbReference>
<dbReference type="RefSeq" id="WP_012699430.1">
    <property type="nucleotide sequence ID" value="NC_012560.1"/>
</dbReference>
<dbReference type="SMR" id="C1DLQ7"/>
<dbReference type="STRING" id="322710.Avin_07590"/>
<dbReference type="EnsemblBacteria" id="ACO77005">
    <property type="protein sequence ID" value="ACO77005"/>
    <property type="gene ID" value="Avin_07590"/>
</dbReference>
<dbReference type="GeneID" id="88184155"/>
<dbReference type="KEGG" id="avn:Avin_07590"/>
<dbReference type="eggNOG" id="COG3705">
    <property type="taxonomic scope" value="Bacteria"/>
</dbReference>
<dbReference type="HOGENOM" id="CLU_025113_0_1_6"/>
<dbReference type="OrthoDB" id="9769617at2"/>
<dbReference type="UniPathway" id="UPA00031">
    <property type="reaction ID" value="UER00006"/>
</dbReference>
<dbReference type="Proteomes" id="UP000002424">
    <property type="component" value="Chromosome"/>
</dbReference>
<dbReference type="GO" id="GO:0005737">
    <property type="term" value="C:cytoplasm"/>
    <property type="evidence" value="ECO:0007669"/>
    <property type="project" value="UniProtKB-SubCell"/>
</dbReference>
<dbReference type="GO" id="GO:0000105">
    <property type="term" value="P:L-histidine biosynthetic process"/>
    <property type="evidence" value="ECO:0007669"/>
    <property type="project" value="UniProtKB-UniRule"/>
</dbReference>
<dbReference type="CDD" id="cd00773">
    <property type="entry name" value="HisRS-like_core"/>
    <property type="match status" value="1"/>
</dbReference>
<dbReference type="Gene3D" id="3.30.930.10">
    <property type="entry name" value="Bira Bifunctional Protein, Domain 2"/>
    <property type="match status" value="1"/>
</dbReference>
<dbReference type="HAMAP" id="MF_00125">
    <property type="entry name" value="HisZ"/>
    <property type="match status" value="1"/>
</dbReference>
<dbReference type="InterPro" id="IPR045864">
    <property type="entry name" value="aa-tRNA-synth_II/BPL/LPL"/>
</dbReference>
<dbReference type="InterPro" id="IPR041715">
    <property type="entry name" value="HisRS-like_core"/>
</dbReference>
<dbReference type="InterPro" id="IPR004516">
    <property type="entry name" value="HisRS/HisZ"/>
</dbReference>
<dbReference type="InterPro" id="IPR004517">
    <property type="entry name" value="HisZ"/>
</dbReference>
<dbReference type="NCBIfam" id="TIGR00443">
    <property type="entry name" value="hisZ_biosyn_reg"/>
    <property type="match status" value="1"/>
</dbReference>
<dbReference type="NCBIfam" id="NF008935">
    <property type="entry name" value="PRK12292.1-1"/>
    <property type="match status" value="1"/>
</dbReference>
<dbReference type="NCBIfam" id="NF008937">
    <property type="entry name" value="PRK12292.1-4"/>
    <property type="match status" value="1"/>
</dbReference>
<dbReference type="NCBIfam" id="NF009086">
    <property type="entry name" value="PRK12421.1"/>
    <property type="match status" value="1"/>
</dbReference>
<dbReference type="PANTHER" id="PTHR11476:SF7">
    <property type="entry name" value="HISTIDINE--TRNA LIGASE"/>
    <property type="match status" value="1"/>
</dbReference>
<dbReference type="PANTHER" id="PTHR11476">
    <property type="entry name" value="HISTIDYL-TRNA SYNTHETASE"/>
    <property type="match status" value="1"/>
</dbReference>
<dbReference type="Pfam" id="PF13393">
    <property type="entry name" value="tRNA-synt_His"/>
    <property type="match status" value="1"/>
</dbReference>
<dbReference type="PIRSF" id="PIRSF001549">
    <property type="entry name" value="His-tRNA_synth"/>
    <property type="match status" value="1"/>
</dbReference>
<dbReference type="SUPFAM" id="SSF55681">
    <property type="entry name" value="Class II aaRS and biotin synthetases"/>
    <property type="match status" value="1"/>
</dbReference>
<accession>C1DLQ7</accession>
<comment type="function">
    <text evidence="1">Required for the first step of histidine biosynthesis. May allow the feedback regulation of ATP phosphoribosyltransferase activity by histidine.</text>
</comment>
<comment type="pathway">
    <text evidence="1">Amino-acid biosynthesis; L-histidine biosynthesis; L-histidine from 5-phospho-alpha-D-ribose 1-diphosphate: step 1/9.</text>
</comment>
<comment type="subunit">
    <text evidence="1">Heteromultimer composed of HisG and HisZ subunits.</text>
</comment>
<comment type="subcellular location">
    <subcellularLocation>
        <location evidence="1">Cytoplasm</location>
    </subcellularLocation>
</comment>
<comment type="miscellaneous">
    <text>This function is generally fulfilled by the C-terminal part of HisG, which is missing in some bacteria such as this one.</text>
</comment>
<comment type="similarity">
    <text evidence="1">Belongs to the class-II aminoacyl-tRNA synthetase family. HisZ subfamily.</text>
</comment>
<proteinExistence type="inferred from homology"/>
<protein>
    <recommendedName>
        <fullName evidence="1">ATP phosphoribosyltransferase regulatory subunit</fullName>
    </recommendedName>
</protein>
<name>HISZ_AZOVD</name>
<organism>
    <name type="scientific">Azotobacter vinelandii (strain DJ / ATCC BAA-1303)</name>
    <dbReference type="NCBI Taxonomy" id="322710"/>
    <lineage>
        <taxon>Bacteria</taxon>
        <taxon>Pseudomonadati</taxon>
        <taxon>Pseudomonadota</taxon>
        <taxon>Gammaproteobacteria</taxon>
        <taxon>Pseudomonadales</taxon>
        <taxon>Pseudomonadaceae</taxon>
        <taxon>Azotobacter</taxon>
    </lineage>
</organism>
<feature type="chain" id="PRO_1000203112" description="ATP phosphoribosyltransferase regulatory subunit">
    <location>
        <begin position="1"/>
        <end position="395"/>
    </location>
</feature>
<reference key="1">
    <citation type="journal article" date="2009" name="J. Bacteriol.">
        <title>Genome sequence of Azotobacter vinelandii, an obligate aerobe specialized to support diverse anaerobic metabolic processes.</title>
        <authorList>
            <person name="Setubal J.C."/>
            <person name="Dos Santos P."/>
            <person name="Goldman B.S."/>
            <person name="Ertesvaag H."/>
            <person name="Espin G."/>
            <person name="Rubio L.M."/>
            <person name="Valla S."/>
            <person name="Almeida N.F."/>
            <person name="Balasubramanian D."/>
            <person name="Cromes L."/>
            <person name="Curatti L."/>
            <person name="Du Z."/>
            <person name="Godsy E."/>
            <person name="Goodner B."/>
            <person name="Hellner-Burris K."/>
            <person name="Hernandez J.A."/>
            <person name="Houmiel K."/>
            <person name="Imperial J."/>
            <person name="Kennedy C."/>
            <person name="Larson T.J."/>
            <person name="Latreille P."/>
            <person name="Ligon L.S."/>
            <person name="Lu J."/>
            <person name="Maerk M."/>
            <person name="Miller N.M."/>
            <person name="Norton S."/>
            <person name="O'Carroll I.P."/>
            <person name="Paulsen I."/>
            <person name="Raulfs E.C."/>
            <person name="Roemer R."/>
            <person name="Rosser J."/>
            <person name="Segura D."/>
            <person name="Slater S."/>
            <person name="Stricklin S.L."/>
            <person name="Studholme D.J."/>
            <person name="Sun J."/>
            <person name="Viana C.J."/>
            <person name="Wallin E."/>
            <person name="Wang B."/>
            <person name="Wheeler C."/>
            <person name="Zhu H."/>
            <person name="Dean D.R."/>
            <person name="Dixon R."/>
            <person name="Wood D."/>
        </authorList>
    </citation>
    <scope>NUCLEOTIDE SEQUENCE [LARGE SCALE GENOMIC DNA]</scope>
    <source>
        <strain>DJ / ATCC BAA-1303</strain>
    </source>
</reference>
<keyword id="KW-0028">Amino-acid biosynthesis</keyword>
<keyword id="KW-0963">Cytoplasm</keyword>
<keyword id="KW-0368">Histidine biosynthesis</keyword>
<gene>
    <name evidence="1" type="primary">hisZ</name>
    <name type="ordered locus">Avin_07590</name>
</gene>